<protein>
    <recommendedName>
        <fullName evidence="1">1-pyrroline-5-carboxylate dehydrogenase</fullName>
        <shortName evidence="1">P5C dehydrogenase</shortName>
        <ecNumber evidence="1">1.2.1.88</ecNumber>
    </recommendedName>
    <alternativeName>
        <fullName evidence="1">L-glutamate gamma-semialdehyde dehydrogenase</fullName>
    </alternativeName>
</protein>
<gene>
    <name evidence="1" type="primary">rocA</name>
    <name type="ordered locus">BCB4264_A0355</name>
</gene>
<reference key="1">
    <citation type="submission" date="2008-10" db="EMBL/GenBank/DDBJ databases">
        <title>Genome sequence of Bacillus cereus B4264.</title>
        <authorList>
            <person name="Dodson R.J."/>
            <person name="Durkin A.S."/>
            <person name="Rosovitz M.J."/>
            <person name="Rasko D.A."/>
            <person name="Hoffmaster A."/>
            <person name="Ravel J."/>
            <person name="Sutton G."/>
        </authorList>
    </citation>
    <scope>NUCLEOTIDE SEQUENCE [LARGE SCALE GENOMIC DNA]</scope>
    <source>
        <strain>B4264</strain>
    </source>
</reference>
<evidence type="ECO:0000255" key="1">
    <source>
        <dbReference type="HAMAP-Rule" id="MF_00733"/>
    </source>
</evidence>
<proteinExistence type="inferred from homology"/>
<sequence>MVVAYKHEPFTDFSVEANKLAFEEGLKKVESYLGQDYPLIIGGEKITTEDKIVSVNPANKEELVGRVSKASRELAEKAMQVADETFQTWRKSKPEMRADILFRAAAIVRRRKHEFSAILVKEAGKPWNEADADTAEAIDFMEYYGRQMLKLKDGIPVESRPIEYNRFSYIPLGVGVIISPWNFPFAIMAGMTTAALVSGNTVLLKPASTTPVVAAKFMEVLEEAGLPAGVVNFVPGNGSEVGDYLVDHPRTRFVSFTGSRDVGIRIYERAAKVNPGQIWLKRVIAEMGGKDTIVVDKEADLELAAKSIVASAFGFSGQKCSACSRAVIHEDVYDHVLNRAVELTKELTVANPAVLGTNMGPVNDQAAFDKVMSYVAIGKEEGRILAGGEGDDSKGWFIQPTIVADVAEDARLMKEEIFGPVVAFCKAKDFDHALAIANNTEYGLTGAVITNNRDHIEKAREDFHVGNLYFNRGCTGAIVGYQPFGGFNMSGTDSKAGGPDYLALHMQAKTTSETL</sequence>
<name>ROCA_BACC4</name>
<dbReference type="EC" id="1.2.1.88" evidence="1"/>
<dbReference type="EMBL" id="CP001176">
    <property type="protein sequence ID" value="ACK62668.1"/>
    <property type="molecule type" value="Genomic_DNA"/>
</dbReference>
<dbReference type="SMR" id="B7H4V1"/>
<dbReference type="KEGG" id="bcb:BCB4264_A0355"/>
<dbReference type="HOGENOM" id="CLU_005391_0_0_9"/>
<dbReference type="UniPathway" id="UPA00261">
    <property type="reaction ID" value="UER00374"/>
</dbReference>
<dbReference type="Proteomes" id="UP000007096">
    <property type="component" value="Chromosome"/>
</dbReference>
<dbReference type="GO" id="GO:0009898">
    <property type="term" value="C:cytoplasmic side of plasma membrane"/>
    <property type="evidence" value="ECO:0007669"/>
    <property type="project" value="TreeGrafter"/>
</dbReference>
<dbReference type="GO" id="GO:0003842">
    <property type="term" value="F:1-pyrroline-5-carboxylate dehydrogenase activity"/>
    <property type="evidence" value="ECO:0007669"/>
    <property type="project" value="UniProtKB-UniRule"/>
</dbReference>
<dbReference type="GO" id="GO:0006537">
    <property type="term" value="P:glutamate biosynthetic process"/>
    <property type="evidence" value="ECO:0007669"/>
    <property type="project" value="UniProtKB-UniRule"/>
</dbReference>
<dbReference type="GO" id="GO:0010133">
    <property type="term" value="P:proline catabolic process to glutamate"/>
    <property type="evidence" value="ECO:0007669"/>
    <property type="project" value="UniProtKB-UniPathway"/>
</dbReference>
<dbReference type="CDD" id="cd07124">
    <property type="entry name" value="ALDH_PutA-P5CDH-RocA"/>
    <property type="match status" value="1"/>
</dbReference>
<dbReference type="FunFam" id="3.40.309.10:FF:000005">
    <property type="entry name" value="1-pyrroline-5-carboxylate dehydrogenase 1"/>
    <property type="match status" value="1"/>
</dbReference>
<dbReference type="FunFam" id="3.40.605.10:FF:000045">
    <property type="entry name" value="1-pyrroline-5-carboxylate dehydrogenase 1"/>
    <property type="match status" value="1"/>
</dbReference>
<dbReference type="Gene3D" id="3.40.605.10">
    <property type="entry name" value="Aldehyde Dehydrogenase, Chain A, domain 1"/>
    <property type="match status" value="1"/>
</dbReference>
<dbReference type="Gene3D" id="3.40.309.10">
    <property type="entry name" value="Aldehyde Dehydrogenase, Chain A, domain 2"/>
    <property type="match status" value="1"/>
</dbReference>
<dbReference type="HAMAP" id="MF_00733">
    <property type="entry name" value="RocA"/>
    <property type="match status" value="1"/>
</dbReference>
<dbReference type="InterPro" id="IPR016161">
    <property type="entry name" value="Ald_DH/histidinol_DH"/>
</dbReference>
<dbReference type="InterPro" id="IPR016163">
    <property type="entry name" value="Ald_DH_C"/>
</dbReference>
<dbReference type="InterPro" id="IPR016160">
    <property type="entry name" value="Ald_DH_CS_CYS"/>
</dbReference>
<dbReference type="InterPro" id="IPR029510">
    <property type="entry name" value="Ald_DH_CS_GLU"/>
</dbReference>
<dbReference type="InterPro" id="IPR016162">
    <property type="entry name" value="Ald_DH_N"/>
</dbReference>
<dbReference type="InterPro" id="IPR015590">
    <property type="entry name" value="Aldehyde_DH_dom"/>
</dbReference>
<dbReference type="InterPro" id="IPR050485">
    <property type="entry name" value="Proline_metab_enzyme"/>
</dbReference>
<dbReference type="InterPro" id="IPR005932">
    <property type="entry name" value="RocA"/>
</dbReference>
<dbReference type="InterPro" id="IPR047597">
    <property type="entry name" value="RocA_bacillales"/>
</dbReference>
<dbReference type="NCBIfam" id="TIGR01237">
    <property type="entry name" value="D1pyr5carbox2"/>
    <property type="match status" value="1"/>
</dbReference>
<dbReference type="NCBIfam" id="NF002852">
    <property type="entry name" value="PRK03137.1"/>
    <property type="match status" value="1"/>
</dbReference>
<dbReference type="PANTHER" id="PTHR42862">
    <property type="entry name" value="DELTA-1-PYRROLINE-5-CARBOXYLATE DEHYDROGENASE 1, ISOFORM A-RELATED"/>
    <property type="match status" value="1"/>
</dbReference>
<dbReference type="PANTHER" id="PTHR42862:SF1">
    <property type="entry name" value="DELTA-1-PYRROLINE-5-CARBOXYLATE DEHYDROGENASE 2, ISOFORM A-RELATED"/>
    <property type="match status" value="1"/>
</dbReference>
<dbReference type="Pfam" id="PF00171">
    <property type="entry name" value="Aldedh"/>
    <property type="match status" value="1"/>
</dbReference>
<dbReference type="SUPFAM" id="SSF53720">
    <property type="entry name" value="ALDH-like"/>
    <property type="match status" value="1"/>
</dbReference>
<dbReference type="PROSITE" id="PS00070">
    <property type="entry name" value="ALDEHYDE_DEHYDR_CYS"/>
    <property type="match status" value="1"/>
</dbReference>
<dbReference type="PROSITE" id="PS00687">
    <property type="entry name" value="ALDEHYDE_DEHYDR_GLU"/>
    <property type="match status" value="1"/>
</dbReference>
<comment type="catalytic activity">
    <reaction evidence="1">
        <text>L-glutamate 5-semialdehyde + NAD(+) + H2O = L-glutamate + NADH + 2 H(+)</text>
        <dbReference type="Rhea" id="RHEA:30235"/>
        <dbReference type="ChEBI" id="CHEBI:15377"/>
        <dbReference type="ChEBI" id="CHEBI:15378"/>
        <dbReference type="ChEBI" id="CHEBI:29985"/>
        <dbReference type="ChEBI" id="CHEBI:57540"/>
        <dbReference type="ChEBI" id="CHEBI:57945"/>
        <dbReference type="ChEBI" id="CHEBI:58066"/>
        <dbReference type="EC" id="1.2.1.88"/>
    </reaction>
</comment>
<comment type="pathway">
    <text evidence="1">Amino-acid degradation; L-proline degradation into L-glutamate; L-glutamate from L-proline: step 2/2.</text>
</comment>
<comment type="similarity">
    <text evidence="1">Belongs to the aldehyde dehydrogenase family. RocA subfamily.</text>
</comment>
<feature type="chain" id="PRO_1000189846" description="1-pyrroline-5-carboxylate dehydrogenase">
    <location>
        <begin position="1"/>
        <end position="515"/>
    </location>
</feature>
<feature type="active site" evidence="1">
    <location>
        <position position="286"/>
    </location>
</feature>
<feature type="active site" evidence="1">
    <location>
        <position position="320"/>
    </location>
</feature>
<keyword id="KW-0520">NAD</keyword>
<keyword id="KW-0560">Oxidoreductase</keyword>
<accession>B7H4V1</accession>
<organism>
    <name type="scientific">Bacillus cereus (strain B4264)</name>
    <dbReference type="NCBI Taxonomy" id="405532"/>
    <lineage>
        <taxon>Bacteria</taxon>
        <taxon>Bacillati</taxon>
        <taxon>Bacillota</taxon>
        <taxon>Bacilli</taxon>
        <taxon>Bacillales</taxon>
        <taxon>Bacillaceae</taxon>
        <taxon>Bacillus</taxon>
        <taxon>Bacillus cereus group</taxon>
    </lineage>
</organism>